<name>AROQ_PASMU</name>
<feature type="chain" id="PRO_0000159912" description="3-dehydroquinate dehydratase">
    <location>
        <begin position="1"/>
        <end position="148"/>
    </location>
</feature>
<feature type="active site" description="Proton acceptor" evidence="1">
    <location>
        <position position="26"/>
    </location>
</feature>
<feature type="active site" description="Proton donor" evidence="1">
    <location>
        <position position="103"/>
    </location>
</feature>
<feature type="binding site" evidence="1">
    <location>
        <position position="77"/>
    </location>
    <ligand>
        <name>substrate</name>
    </ligand>
</feature>
<feature type="binding site" evidence="1">
    <location>
        <position position="83"/>
    </location>
    <ligand>
        <name>substrate</name>
    </ligand>
</feature>
<feature type="binding site" evidence="1">
    <location>
        <position position="90"/>
    </location>
    <ligand>
        <name>substrate</name>
    </ligand>
</feature>
<feature type="binding site" evidence="1">
    <location>
        <begin position="104"/>
        <end position="105"/>
    </location>
    <ligand>
        <name>substrate</name>
    </ligand>
</feature>
<feature type="binding site" evidence="1">
    <location>
        <position position="114"/>
    </location>
    <ligand>
        <name>substrate</name>
    </ligand>
</feature>
<feature type="site" description="Transition state stabilizer" evidence="1">
    <location>
        <position position="21"/>
    </location>
</feature>
<sequence>MSQLKRILLLNGPNLNMLGVREPTHYGSLSLKTIEQDLQSLAQQYAVELSCFQANSEEKLIEKIHQSFQQIDFIIINPAAFTHTSVALRDALLAVAIPFVEVHLSNVHKREPFRHHSYFSDVAEGVICGLGAKGYEFALQFAVSFLKK</sequence>
<comment type="function">
    <text evidence="1">Catalyzes a trans-dehydration via an enolate intermediate.</text>
</comment>
<comment type="catalytic activity">
    <reaction>
        <text>3-dehydroquinate = 3-dehydroshikimate + H2O</text>
        <dbReference type="Rhea" id="RHEA:21096"/>
        <dbReference type="ChEBI" id="CHEBI:15377"/>
        <dbReference type="ChEBI" id="CHEBI:16630"/>
        <dbReference type="ChEBI" id="CHEBI:32364"/>
        <dbReference type="EC" id="4.2.1.10"/>
    </reaction>
</comment>
<comment type="pathway">
    <text>Metabolic intermediate biosynthesis; chorismate biosynthesis; chorismate from D-erythrose 4-phosphate and phosphoenolpyruvate: step 3/7.</text>
</comment>
<comment type="subunit">
    <text evidence="1">Homododecamer.</text>
</comment>
<comment type="similarity">
    <text evidence="2">Belongs to the type-II 3-dehydroquinase family.</text>
</comment>
<organism>
    <name type="scientific">Pasteurella multocida (strain Pm70)</name>
    <dbReference type="NCBI Taxonomy" id="272843"/>
    <lineage>
        <taxon>Bacteria</taxon>
        <taxon>Pseudomonadati</taxon>
        <taxon>Pseudomonadota</taxon>
        <taxon>Gammaproteobacteria</taxon>
        <taxon>Pasteurellales</taxon>
        <taxon>Pasteurellaceae</taxon>
        <taxon>Pasteurella</taxon>
    </lineage>
</organism>
<dbReference type="EC" id="4.2.1.10"/>
<dbReference type="EMBL" id="AE004439">
    <property type="protein sequence ID" value="AAK03177.1"/>
    <property type="molecule type" value="Genomic_DNA"/>
</dbReference>
<dbReference type="RefSeq" id="WP_010907014.1">
    <property type="nucleotide sequence ID" value="NC_002663.1"/>
</dbReference>
<dbReference type="SMR" id="P57903"/>
<dbReference type="STRING" id="272843.PM1093"/>
<dbReference type="EnsemblBacteria" id="AAK03177">
    <property type="protein sequence ID" value="AAK03177"/>
    <property type="gene ID" value="PM1093"/>
</dbReference>
<dbReference type="KEGG" id="pmu:PM1093"/>
<dbReference type="PATRIC" id="fig|272843.6.peg.1107"/>
<dbReference type="HOGENOM" id="CLU_090968_1_0_6"/>
<dbReference type="OrthoDB" id="9790793at2"/>
<dbReference type="UniPathway" id="UPA00053">
    <property type="reaction ID" value="UER00086"/>
</dbReference>
<dbReference type="Proteomes" id="UP000000809">
    <property type="component" value="Chromosome"/>
</dbReference>
<dbReference type="GO" id="GO:0003855">
    <property type="term" value="F:3-dehydroquinate dehydratase activity"/>
    <property type="evidence" value="ECO:0007669"/>
    <property type="project" value="UniProtKB-UniRule"/>
</dbReference>
<dbReference type="GO" id="GO:0008652">
    <property type="term" value="P:amino acid biosynthetic process"/>
    <property type="evidence" value="ECO:0007669"/>
    <property type="project" value="UniProtKB-KW"/>
</dbReference>
<dbReference type="GO" id="GO:0009073">
    <property type="term" value="P:aromatic amino acid family biosynthetic process"/>
    <property type="evidence" value="ECO:0007669"/>
    <property type="project" value="UniProtKB-KW"/>
</dbReference>
<dbReference type="GO" id="GO:0009423">
    <property type="term" value="P:chorismate biosynthetic process"/>
    <property type="evidence" value="ECO:0007669"/>
    <property type="project" value="UniProtKB-UniRule"/>
</dbReference>
<dbReference type="GO" id="GO:0019631">
    <property type="term" value="P:quinate catabolic process"/>
    <property type="evidence" value="ECO:0007669"/>
    <property type="project" value="TreeGrafter"/>
</dbReference>
<dbReference type="CDD" id="cd00466">
    <property type="entry name" value="DHQase_II"/>
    <property type="match status" value="1"/>
</dbReference>
<dbReference type="Gene3D" id="3.40.50.9100">
    <property type="entry name" value="Dehydroquinase, class II"/>
    <property type="match status" value="1"/>
</dbReference>
<dbReference type="HAMAP" id="MF_00169">
    <property type="entry name" value="AroQ"/>
    <property type="match status" value="1"/>
</dbReference>
<dbReference type="InterPro" id="IPR001874">
    <property type="entry name" value="DHquinase_II"/>
</dbReference>
<dbReference type="InterPro" id="IPR018509">
    <property type="entry name" value="DHquinase_II_CS"/>
</dbReference>
<dbReference type="InterPro" id="IPR036441">
    <property type="entry name" value="DHquinase_II_sf"/>
</dbReference>
<dbReference type="NCBIfam" id="TIGR01088">
    <property type="entry name" value="aroQ"/>
    <property type="match status" value="1"/>
</dbReference>
<dbReference type="NCBIfam" id="NF003804">
    <property type="entry name" value="PRK05395.1-1"/>
    <property type="match status" value="1"/>
</dbReference>
<dbReference type="NCBIfam" id="NF003805">
    <property type="entry name" value="PRK05395.1-2"/>
    <property type="match status" value="1"/>
</dbReference>
<dbReference type="NCBIfam" id="NF003806">
    <property type="entry name" value="PRK05395.1-3"/>
    <property type="match status" value="1"/>
</dbReference>
<dbReference type="NCBIfam" id="NF003807">
    <property type="entry name" value="PRK05395.1-4"/>
    <property type="match status" value="1"/>
</dbReference>
<dbReference type="PANTHER" id="PTHR21272">
    <property type="entry name" value="CATABOLIC 3-DEHYDROQUINASE"/>
    <property type="match status" value="1"/>
</dbReference>
<dbReference type="PANTHER" id="PTHR21272:SF3">
    <property type="entry name" value="CATABOLIC 3-DEHYDROQUINASE"/>
    <property type="match status" value="1"/>
</dbReference>
<dbReference type="Pfam" id="PF01220">
    <property type="entry name" value="DHquinase_II"/>
    <property type="match status" value="1"/>
</dbReference>
<dbReference type="PIRSF" id="PIRSF001399">
    <property type="entry name" value="DHquinase_II"/>
    <property type="match status" value="1"/>
</dbReference>
<dbReference type="SUPFAM" id="SSF52304">
    <property type="entry name" value="Type II 3-dehydroquinate dehydratase"/>
    <property type="match status" value="1"/>
</dbReference>
<dbReference type="PROSITE" id="PS01029">
    <property type="entry name" value="DEHYDROQUINASE_II"/>
    <property type="match status" value="1"/>
</dbReference>
<protein>
    <recommendedName>
        <fullName>3-dehydroquinate dehydratase</fullName>
        <shortName>3-dehydroquinase</shortName>
        <ecNumber>4.2.1.10</ecNumber>
    </recommendedName>
    <alternativeName>
        <fullName>Type II DHQase</fullName>
    </alternativeName>
</protein>
<reference key="1">
    <citation type="journal article" date="2001" name="Proc. Natl. Acad. Sci. U.S.A.">
        <title>Complete genomic sequence of Pasteurella multocida Pm70.</title>
        <authorList>
            <person name="May B.J."/>
            <person name="Zhang Q."/>
            <person name="Li L.L."/>
            <person name="Paustian M.L."/>
            <person name="Whittam T.S."/>
            <person name="Kapur V."/>
        </authorList>
    </citation>
    <scope>NUCLEOTIDE SEQUENCE [LARGE SCALE GENOMIC DNA]</scope>
    <source>
        <strain>Pm70</strain>
    </source>
</reference>
<keyword id="KW-0028">Amino-acid biosynthesis</keyword>
<keyword id="KW-0057">Aromatic amino acid biosynthesis</keyword>
<keyword id="KW-0456">Lyase</keyword>
<keyword id="KW-1185">Reference proteome</keyword>
<gene>
    <name type="primary">aroQ</name>
    <name type="synonym">aroD</name>
    <name type="ordered locus">PM1093</name>
</gene>
<evidence type="ECO:0000250" key="1"/>
<evidence type="ECO:0000305" key="2"/>
<proteinExistence type="inferred from homology"/>
<accession>P57903</accession>